<gene>
    <name evidence="1" type="primary">pth</name>
    <name type="ordered locus">BF1163</name>
</gene>
<organism>
    <name type="scientific">Bacteroides fragilis (strain ATCC 25285 / DSM 2151 / CCUG 4856 / JCM 11019 / LMG 10263 / NCTC 9343 / Onslow / VPI 2553 / EN-2)</name>
    <dbReference type="NCBI Taxonomy" id="272559"/>
    <lineage>
        <taxon>Bacteria</taxon>
        <taxon>Pseudomonadati</taxon>
        <taxon>Bacteroidota</taxon>
        <taxon>Bacteroidia</taxon>
        <taxon>Bacteroidales</taxon>
        <taxon>Bacteroidaceae</taxon>
        <taxon>Bacteroides</taxon>
    </lineage>
</organism>
<proteinExistence type="inferred from homology"/>
<dbReference type="EC" id="3.1.1.29" evidence="1"/>
<dbReference type="EMBL" id="CR626927">
    <property type="protein sequence ID" value="CAH06885.1"/>
    <property type="molecule type" value="Genomic_DNA"/>
</dbReference>
<dbReference type="RefSeq" id="WP_005785758.1">
    <property type="nucleotide sequence ID" value="NZ_UFTH01000001.1"/>
</dbReference>
<dbReference type="SMR" id="Q5LG56"/>
<dbReference type="PaxDb" id="272559-BF9343_1104"/>
<dbReference type="GeneID" id="60366091"/>
<dbReference type="KEGG" id="bfs:BF9343_1104"/>
<dbReference type="eggNOG" id="COG0193">
    <property type="taxonomic scope" value="Bacteria"/>
</dbReference>
<dbReference type="HOGENOM" id="CLU_062456_4_1_10"/>
<dbReference type="Proteomes" id="UP000006731">
    <property type="component" value="Chromosome"/>
</dbReference>
<dbReference type="GO" id="GO:0005737">
    <property type="term" value="C:cytoplasm"/>
    <property type="evidence" value="ECO:0007669"/>
    <property type="project" value="UniProtKB-SubCell"/>
</dbReference>
<dbReference type="GO" id="GO:0004045">
    <property type="term" value="F:peptidyl-tRNA hydrolase activity"/>
    <property type="evidence" value="ECO:0007669"/>
    <property type="project" value="UniProtKB-UniRule"/>
</dbReference>
<dbReference type="GO" id="GO:0000049">
    <property type="term" value="F:tRNA binding"/>
    <property type="evidence" value="ECO:0007669"/>
    <property type="project" value="UniProtKB-UniRule"/>
</dbReference>
<dbReference type="GO" id="GO:0006515">
    <property type="term" value="P:protein quality control for misfolded or incompletely synthesized proteins"/>
    <property type="evidence" value="ECO:0007669"/>
    <property type="project" value="UniProtKB-UniRule"/>
</dbReference>
<dbReference type="GO" id="GO:0072344">
    <property type="term" value="P:rescue of stalled ribosome"/>
    <property type="evidence" value="ECO:0007669"/>
    <property type="project" value="UniProtKB-UniRule"/>
</dbReference>
<dbReference type="CDD" id="cd00462">
    <property type="entry name" value="PTH"/>
    <property type="match status" value="1"/>
</dbReference>
<dbReference type="FunFam" id="3.40.50.1470:FF:000001">
    <property type="entry name" value="Peptidyl-tRNA hydrolase"/>
    <property type="match status" value="1"/>
</dbReference>
<dbReference type="Gene3D" id="3.40.50.1470">
    <property type="entry name" value="Peptidyl-tRNA hydrolase"/>
    <property type="match status" value="1"/>
</dbReference>
<dbReference type="HAMAP" id="MF_00083">
    <property type="entry name" value="Pept_tRNA_hydro_bact"/>
    <property type="match status" value="1"/>
</dbReference>
<dbReference type="InterPro" id="IPR001328">
    <property type="entry name" value="Pept_tRNA_hydro"/>
</dbReference>
<dbReference type="InterPro" id="IPR018171">
    <property type="entry name" value="Pept_tRNA_hydro_CS"/>
</dbReference>
<dbReference type="InterPro" id="IPR036416">
    <property type="entry name" value="Pept_tRNA_hydro_sf"/>
</dbReference>
<dbReference type="NCBIfam" id="TIGR00447">
    <property type="entry name" value="pth"/>
    <property type="match status" value="1"/>
</dbReference>
<dbReference type="PANTHER" id="PTHR17224">
    <property type="entry name" value="PEPTIDYL-TRNA HYDROLASE"/>
    <property type="match status" value="1"/>
</dbReference>
<dbReference type="PANTHER" id="PTHR17224:SF1">
    <property type="entry name" value="PEPTIDYL-TRNA HYDROLASE"/>
    <property type="match status" value="1"/>
</dbReference>
<dbReference type="Pfam" id="PF01195">
    <property type="entry name" value="Pept_tRNA_hydro"/>
    <property type="match status" value="1"/>
</dbReference>
<dbReference type="SUPFAM" id="SSF53178">
    <property type="entry name" value="Peptidyl-tRNA hydrolase-like"/>
    <property type="match status" value="1"/>
</dbReference>
<dbReference type="PROSITE" id="PS01195">
    <property type="entry name" value="PEPT_TRNA_HYDROL_1"/>
    <property type="match status" value="1"/>
</dbReference>
<keyword id="KW-0963">Cytoplasm</keyword>
<keyword id="KW-0378">Hydrolase</keyword>
<keyword id="KW-0694">RNA-binding</keyword>
<keyword id="KW-0820">tRNA-binding</keyword>
<accession>Q5LG56</accession>
<comment type="function">
    <text evidence="1">Hydrolyzes ribosome-free peptidyl-tRNAs (with 1 or more amino acids incorporated), which drop off the ribosome during protein synthesis, or as a result of ribosome stalling.</text>
</comment>
<comment type="function">
    <text evidence="1">Catalyzes the release of premature peptidyl moieties from peptidyl-tRNA molecules trapped in stalled 50S ribosomal subunits, and thus maintains levels of free tRNAs and 50S ribosomes.</text>
</comment>
<comment type="catalytic activity">
    <reaction evidence="1">
        <text>an N-acyl-L-alpha-aminoacyl-tRNA + H2O = an N-acyl-L-amino acid + a tRNA + H(+)</text>
        <dbReference type="Rhea" id="RHEA:54448"/>
        <dbReference type="Rhea" id="RHEA-COMP:10123"/>
        <dbReference type="Rhea" id="RHEA-COMP:13883"/>
        <dbReference type="ChEBI" id="CHEBI:15377"/>
        <dbReference type="ChEBI" id="CHEBI:15378"/>
        <dbReference type="ChEBI" id="CHEBI:59874"/>
        <dbReference type="ChEBI" id="CHEBI:78442"/>
        <dbReference type="ChEBI" id="CHEBI:138191"/>
        <dbReference type="EC" id="3.1.1.29"/>
    </reaction>
</comment>
<comment type="subunit">
    <text evidence="1">Monomer.</text>
</comment>
<comment type="subcellular location">
    <subcellularLocation>
        <location evidence="1">Cytoplasm</location>
    </subcellularLocation>
</comment>
<comment type="similarity">
    <text evidence="1">Belongs to the PTH family.</text>
</comment>
<reference key="1">
    <citation type="journal article" date="2005" name="Science">
        <title>Extensive DNA inversions in the B. fragilis genome control variable gene expression.</title>
        <authorList>
            <person name="Cerdeno-Tarraga A.-M."/>
            <person name="Patrick S."/>
            <person name="Crossman L.C."/>
            <person name="Blakely G."/>
            <person name="Abratt V."/>
            <person name="Lennard N."/>
            <person name="Poxton I."/>
            <person name="Duerden B."/>
            <person name="Harris B."/>
            <person name="Quail M.A."/>
            <person name="Barron A."/>
            <person name="Clark L."/>
            <person name="Corton C."/>
            <person name="Doggett J."/>
            <person name="Holden M.T.G."/>
            <person name="Larke N."/>
            <person name="Line A."/>
            <person name="Lord A."/>
            <person name="Norbertczak H."/>
            <person name="Ormond D."/>
            <person name="Price C."/>
            <person name="Rabbinowitsch E."/>
            <person name="Woodward J."/>
            <person name="Barrell B.G."/>
            <person name="Parkhill J."/>
        </authorList>
    </citation>
    <scope>NUCLEOTIDE SEQUENCE [LARGE SCALE GENOMIC DNA]</scope>
    <source>
        <strain>ATCC 25285 / DSM 2151 / CCUG 4856 / JCM 11019 / LMG 10263 / NCTC 9343 / Onslow / VPI 2553 / EN-2</strain>
    </source>
</reference>
<protein>
    <recommendedName>
        <fullName evidence="1">Peptidyl-tRNA hydrolase</fullName>
        <shortName evidence="1">Pth</shortName>
        <ecNumber evidence="1">3.1.1.29</ecNumber>
    </recommendedName>
</protein>
<evidence type="ECO:0000255" key="1">
    <source>
        <dbReference type="HAMAP-Rule" id="MF_00083"/>
    </source>
</evidence>
<name>PTH_BACFN</name>
<sequence length="187" mass="20914">MKYLIVGLGNIGPEYHETRHNIGFMVLDALARANNLSFTDGRYGFTTTLSVKGRQMILLKPSTFMNLSGNAVRYWMQKENIPLENVLIIVDDLALPFGTLRLKSKGSDAGHNGLKHIATILGTQNYARLRFGIGNDFPRGGQIDFVLGHFTDEDWKTMDERLETAGEIAKSFCLAGIDITMNQFNKK</sequence>
<feature type="chain" id="PRO_0000264006" description="Peptidyl-tRNA hydrolase">
    <location>
        <begin position="1"/>
        <end position="187"/>
    </location>
</feature>
<feature type="active site" description="Proton acceptor" evidence="1">
    <location>
        <position position="20"/>
    </location>
</feature>
<feature type="binding site" evidence="1">
    <location>
        <position position="15"/>
    </location>
    <ligand>
        <name>tRNA</name>
        <dbReference type="ChEBI" id="CHEBI:17843"/>
    </ligand>
</feature>
<feature type="binding site" evidence="1">
    <location>
        <position position="64"/>
    </location>
    <ligand>
        <name>tRNA</name>
        <dbReference type="ChEBI" id="CHEBI:17843"/>
    </ligand>
</feature>
<feature type="binding site" evidence="1">
    <location>
        <position position="66"/>
    </location>
    <ligand>
        <name>tRNA</name>
        <dbReference type="ChEBI" id="CHEBI:17843"/>
    </ligand>
</feature>
<feature type="binding site" evidence="1">
    <location>
        <position position="112"/>
    </location>
    <ligand>
        <name>tRNA</name>
        <dbReference type="ChEBI" id="CHEBI:17843"/>
    </ligand>
</feature>
<feature type="site" description="Discriminates between blocked and unblocked aminoacyl-tRNA" evidence="1">
    <location>
        <position position="10"/>
    </location>
</feature>
<feature type="site" description="Stabilizes the basic form of H active site to accept a proton" evidence="1">
    <location>
        <position position="91"/>
    </location>
</feature>